<proteinExistence type="inferred from homology"/>
<accession>O61272</accession>
<feature type="signal peptide" evidence="2">
    <location>
        <begin position="1"/>
        <end position="19"/>
    </location>
</feature>
<feature type="chain" id="PRO_0000004842" description="Cecropin-A1">
    <location>
        <begin position="20"/>
        <end position="62"/>
    </location>
</feature>
<feature type="modified residue" description="Arginine amide" evidence="1">
    <location>
        <position position="62"/>
    </location>
</feature>
<gene>
    <name type="primary">CecA1</name>
</gene>
<comment type="function">
    <text>Cecropins have lytic and antibacterial activity against several Gram-positive and Gram-negative bacteria.</text>
</comment>
<comment type="subcellular location">
    <subcellularLocation>
        <location>Secreted</location>
    </subcellularLocation>
</comment>
<comment type="similarity">
    <text evidence="3">Belongs to the cecropin family.</text>
</comment>
<evidence type="ECO:0000250" key="1"/>
<evidence type="ECO:0000255" key="2"/>
<evidence type="ECO:0000305" key="3"/>
<protein>
    <recommendedName>
        <fullName>Cecropin-A1</fullName>
    </recommendedName>
</protein>
<keyword id="KW-0027">Amidation</keyword>
<keyword id="KW-0044">Antibiotic</keyword>
<keyword id="KW-0929">Antimicrobial</keyword>
<keyword id="KW-0391">Immunity</keyword>
<keyword id="KW-0399">Innate immunity</keyword>
<keyword id="KW-0964">Secreted</keyword>
<keyword id="KW-0732">Signal</keyword>
<sequence>MNFYNIFVFVALILAITIGQSEAGWLKKIGKKIERVGQHTRDATIQGLGVAQQAPNVAATARG</sequence>
<name>CECA1_DROSI</name>
<reference key="1">
    <citation type="journal article" date="1998" name="Immunogenetics">
        <title>Evolutionary history and mechanism of the Drosophila cecropin gene family.</title>
        <authorList>
            <person name="Date A."/>
            <person name="Satta Y."/>
            <person name="Takahata N."/>
            <person name="Chigusa S.I."/>
        </authorList>
    </citation>
    <scope>NUCLEOTIDE SEQUENCE [GENOMIC DNA]</scope>
</reference>
<reference key="2">
    <citation type="journal article" date="1998" name="Genetics">
        <title>Molecular evolution of the Cecropin multigene family in Drosophila: functional genes vs pseudogenes.</title>
        <authorList>
            <person name="Ramos-Onsins S."/>
            <person name="Aguade M."/>
        </authorList>
    </citation>
    <scope>NUCLEOTIDE SEQUENCE [GENOMIC DNA]</scope>
    <source>
        <strain>Montemayor</strain>
    </source>
</reference>
<dbReference type="EMBL" id="AB010790">
    <property type="protein sequence ID" value="BAA28717.1"/>
    <property type="molecule type" value="Genomic_DNA"/>
</dbReference>
<dbReference type="EMBL" id="Y16860">
    <property type="protein sequence ID" value="CAA76472.1"/>
    <property type="molecule type" value="Genomic_DNA"/>
</dbReference>
<dbReference type="SMR" id="O61272"/>
<dbReference type="GeneID" id="6730202"/>
<dbReference type="OrthoDB" id="7410372at2759"/>
<dbReference type="GO" id="GO:0005576">
    <property type="term" value="C:extracellular region"/>
    <property type="evidence" value="ECO:0000250"/>
    <property type="project" value="UniProtKB"/>
</dbReference>
<dbReference type="GO" id="GO:0005615">
    <property type="term" value="C:extracellular space"/>
    <property type="evidence" value="ECO:0007669"/>
    <property type="project" value="EnsemblMetazoa"/>
</dbReference>
<dbReference type="GO" id="GO:0019731">
    <property type="term" value="P:antibacterial humoral response"/>
    <property type="evidence" value="ECO:0007669"/>
    <property type="project" value="EnsemblMetazoa"/>
</dbReference>
<dbReference type="GO" id="GO:0050829">
    <property type="term" value="P:defense response to Gram-negative bacterium"/>
    <property type="evidence" value="ECO:0007669"/>
    <property type="project" value="EnsemblMetazoa"/>
</dbReference>
<dbReference type="GO" id="GO:0050830">
    <property type="term" value="P:defense response to Gram-positive bacterium"/>
    <property type="evidence" value="ECO:0007669"/>
    <property type="project" value="EnsemblMetazoa"/>
</dbReference>
<dbReference type="GO" id="GO:0002213">
    <property type="term" value="P:defense response to insect"/>
    <property type="evidence" value="ECO:0007669"/>
    <property type="project" value="EnsemblMetazoa"/>
</dbReference>
<dbReference type="GO" id="GO:0051607">
    <property type="term" value="P:defense response to virus"/>
    <property type="evidence" value="ECO:0007669"/>
    <property type="project" value="EnsemblMetazoa"/>
</dbReference>
<dbReference type="GO" id="GO:0045087">
    <property type="term" value="P:innate immune response"/>
    <property type="evidence" value="ECO:0007669"/>
    <property type="project" value="UniProtKB-KW"/>
</dbReference>
<dbReference type="GO" id="GO:0140460">
    <property type="term" value="P:response to Gram-negative bacterium"/>
    <property type="evidence" value="ECO:0007669"/>
    <property type="project" value="EnsemblMetazoa"/>
</dbReference>
<dbReference type="InterPro" id="IPR000875">
    <property type="entry name" value="Cecropin"/>
</dbReference>
<dbReference type="InterPro" id="IPR020400">
    <property type="entry name" value="Cecropin_insect"/>
</dbReference>
<dbReference type="PANTHER" id="PTHR38329">
    <property type="entry name" value="CECROPIN-A1-RELATED"/>
    <property type="match status" value="1"/>
</dbReference>
<dbReference type="PANTHER" id="PTHR38329:SF1">
    <property type="entry name" value="CECROPIN-A1-RELATED"/>
    <property type="match status" value="1"/>
</dbReference>
<dbReference type="Pfam" id="PF00272">
    <property type="entry name" value="Cecropin"/>
    <property type="match status" value="1"/>
</dbReference>
<dbReference type="PROSITE" id="PS00268">
    <property type="entry name" value="CECROPIN"/>
    <property type="match status" value="1"/>
</dbReference>
<organism>
    <name type="scientific">Drosophila simulans</name>
    <name type="common">Fruit fly</name>
    <dbReference type="NCBI Taxonomy" id="7240"/>
    <lineage>
        <taxon>Eukaryota</taxon>
        <taxon>Metazoa</taxon>
        <taxon>Ecdysozoa</taxon>
        <taxon>Arthropoda</taxon>
        <taxon>Hexapoda</taxon>
        <taxon>Insecta</taxon>
        <taxon>Pterygota</taxon>
        <taxon>Neoptera</taxon>
        <taxon>Endopterygota</taxon>
        <taxon>Diptera</taxon>
        <taxon>Brachycera</taxon>
        <taxon>Muscomorpha</taxon>
        <taxon>Ephydroidea</taxon>
        <taxon>Drosophilidae</taxon>
        <taxon>Drosophila</taxon>
        <taxon>Sophophora</taxon>
    </lineage>
</organism>